<protein>
    <recommendedName>
        <fullName evidence="2">Cytochrome c biogenesis protein CcsA</fullName>
    </recommendedName>
</protein>
<evidence type="ECO:0000250" key="1"/>
<evidence type="ECO:0000255" key="2">
    <source>
        <dbReference type="HAMAP-Rule" id="MF_01391"/>
    </source>
</evidence>
<sequence>MDLITLQNFLDNSSFLLLFLTMLIYWAGAAFPNVTWLPTLGTTGVAIANLCMATLLGARWLEAGYFPLSNLYESLFFLAWGVTAIHLVAEQMSRSALVGVVTTPVAMGITAFAALSLPPEMQTSAPLVPALKSNWLMMHVSVMMLSYATLMVGSVLAIAFLVVTRNRDIELKGSSVGTGGYRDKLGRSLLNNNHKQTTVNLTQSNGSGGTAILESVAVKPETVTLSPQRLNLADTLDNISYRIIGLGFPLLTIGIIAGAVWANEAWGSYWSWDPKETWALITWLVFAAYLHARITKGWQGRKPAILAASGFVVVWVCYLGVNLLGKGLHSYGWFF</sequence>
<proteinExistence type="inferred from homology"/>
<reference key="1">
    <citation type="journal article" date="2008" name="Proc. Natl. Acad. Sci. U.S.A.">
        <title>The genome of Cyanothece 51142, a unicellular diazotrophic cyanobacterium important in the marine nitrogen cycle.</title>
        <authorList>
            <person name="Welsh E.A."/>
            <person name="Liberton M."/>
            <person name="Stoeckel J."/>
            <person name="Loh T."/>
            <person name="Elvitigala T."/>
            <person name="Wang C."/>
            <person name="Wollam A."/>
            <person name="Fulton R.S."/>
            <person name="Clifton S.W."/>
            <person name="Jacobs J.M."/>
            <person name="Aurora R."/>
            <person name="Ghosh B.K."/>
            <person name="Sherman L.A."/>
            <person name="Smith R.D."/>
            <person name="Wilson R.K."/>
            <person name="Pakrasi H.B."/>
        </authorList>
    </citation>
    <scope>NUCLEOTIDE SEQUENCE [LARGE SCALE GENOMIC DNA]</scope>
    <source>
        <strain>ATCC 51142 / BH68</strain>
    </source>
</reference>
<keyword id="KW-0201">Cytochrome c-type biogenesis</keyword>
<keyword id="KW-0472">Membrane</keyword>
<keyword id="KW-1185">Reference proteome</keyword>
<keyword id="KW-0793">Thylakoid</keyword>
<keyword id="KW-0812">Transmembrane</keyword>
<keyword id="KW-1133">Transmembrane helix</keyword>
<gene>
    <name evidence="2" type="primary">ccsA</name>
    <name type="ordered locus">cce_0499</name>
</gene>
<name>CCSA_CROS5</name>
<comment type="function">
    <text evidence="2">Required during biogenesis of c-type cytochromes (cytochrome c6 and cytochrome f) at the step of heme attachment.</text>
</comment>
<comment type="subunit">
    <text evidence="1">May interact with ccs1.</text>
</comment>
<comment type="subcellular location">
    <subcellularLocation>
        <location evidence="2">Cellular thylakoid membrane</location>
        <topology evidence="2">Multi-pass membrane protein</topology>
    </subcellularLocation>
</comment>
<comment type="similarity">
    <text evidence="2">Belongs to the CcmF/CycK/Ccl1/NrfE/CcsA family.</text>
</comment>
<organism>
    <name type="scientific">Crocosphaera subtropica (strain ATCC 51142 / BH68)</name>
    <name type="common">Cyanothece sp. (strain ATCC 51142)</name>
    <dbReference type="NCBI Taxonomy" id="43989"/>
    <lineage>
        <taxon>Bacteria</taxon>
        <taxon>Bacillati</taxon>
        <taxon>Cyanobacteriota</taxon>
        <taxon>Cyanophyceae</taxon>
        <taxon>Oscillatoriophycideae</taxon>
        <taxon>Chroococcales</taxon>
        <taxon>Aphanothecaceae</taxon>
        <taxon>Crocosphaera</taxon>
        <taxon>Crocosphaera subtropica</taxon>
    </lineage>
</organism>
<accession>B1WP68</accession>
<dbReference type="EMBL" id="CP000806">
    <property type="protein sequence ID" value="ACB49850.1"/>
    <property type="molecule type" value="Genomic_DNA"/>
</dbReference>
<dbReference type="RefSeq" id="WP_009546582.1">
    <property type="nucleotide sequence ID" value="NC_010546.1"/>
</dbReference>
<dbReference type="SMR" id="B1WP68"/>
<dbReference type="STRING" id="43989.cce_0499"/>
<dbReference type="KEGG" id="cyt:cce_0499"/>
<dbReference type="eggNOG" id="COG0755">
    <property type="taxonomic scope" value="Bacteria"/>
</dbReference>
<dbReference type="HOGENOM" id="CLU_049710_2_4_3"/>
<dbReference type="OrthoDB" id="9814290at2"/>
<dbReference type="Proteomes" id="UP000001203">
    <property type="component" value="Chromosome circular"/>
</dbReference>
<dbReference type="GO" id="GO:0031676">
    <property type="term" value="C:plasma membrane-derived thylakoid membrane"/>
    <property type="evidence" value="ECO:0007669"/>
    <property type="project" value="UniProtKB-SubCell"/>
</dbReference>
<dbReference type="GO" id="GO:0020037">
    <property type="term" value="F:heme binding"/>
    <property type="evidence" value="ECO:0007669"/>
    <property type="project" value="InterPro"/>
</dbReference>
<dbReference type="GO" id="GO:0017004">
    <property type="term" value="P:cytochrome complex assembly"/>
    <property type="evidence" value="ECO:0007669"/>
    <property type="project" value="UniProtKB-UniRule"/>
</dbReference>
<dbReference type="HAMAP" id="MF_01391">
    <property type="entry name" value="CytC_CcsA"/>
    <property type="match status" value="1"/>
</dbReference>
<dbReference type="InterPro" id="IPR002541">
    <property type="entry name" value="Cyt_c_assembly"/>
</dbReference>
<dbReference type="InterPro" id="IPR017562">
    <property type="entry name" value="Cyt_c_biogenesis_CcsA"/>
</dbReference>
<dbReference type="InterPro" id="IPR045062">
    <property type="entry name" value="Cyt_c_biogenesis_CcsA/CcmC"/>
</dbReference>
<dbReference type="NCBIfam" id="TIGR03144">
    <property type="entry name" value="cytochr_II_ccsB"/>
    <property type="match status" value="1"/>
</dbReference>
<dbReference type="PANTHER" id="PTHR30071:SF1">
    <property type="entry name" value="CYTOCHROME B_B6 PROTEIN-RELATED"/>
    <property type="match status" value="1"/>
</dbReference>
<dbReference type="PANTHER" id="PTHR30071">
    <property type="entry name" value="HEME EXPORTER PROTEIN C"/>
    <property type="match status" value="1"/>
</dbReference>
<dbReference type="Pfam" id="PF01578">
    <property type="entry name" value="Cytochrom_C_asm"/>
    <property type="match status" value="1"/>
</dbReference>
<feature type="chain" id="PRO_0000353699" description="Cytochrome c biogenesis protein CcsA">
    <location>
        <begin position="1"/>
        <end position="335"/>
    </location>
</feature>
<feature type="transmembrane region" description="Helical" evidence="2">
    <location>
        <begin position="15"/>
        <end position="35"/>
    </location>
</feature>
<feature type="transmembrane region" description="Helical" evidence="2">
    <location>
        <begin position="36"/>
        <end position="56"/>
    </location>
</feature>
<feature type="transmembrane region" description="Helical" evidence="2">
    <location>
        <begin position="68"/>
        <end position="88"/>
    </location>
</feature>
<feature type="transmembrane region" description="Helical" evidence="2">
    <location>
        <begin position="97"/>
        <end position="117"/>
    </location>
</feature>
<feature type="transmembrane region" description="Helical" evidence="2">
    <location>
        <begin position="142"/>
        <end position="162"/>
    </location>
</feature>
<feature type="transmembrane region" description="Helical" evidence="2">
    <location>
        <begin position="243"/>
        <end position="263"/>
    </location>
</feature>
<feature type="transmembrane region" description="Helical" evidence="2">
    <location>
        <begin position="278"/>
        <end position="298"/>
    </location>
</feature>
<feature type="transmembrane region" description="Helical" evidence="2">
    <location>
        <begin position="304"/>
        <end position="324"/>
    </location>
</feature>